<proteinExistence type="inferred from homology"/>
<sequence length="202" mass="21908">MGANSSSPAGLTPSSLPDDAIEVGRILDAWGVKGWVKILPHSTDPEALFSAKSWFLQAPEAKFRPGFNAFSGTVLLSVDEAKTHSDTVVAKFSGQDDRNAAEALRGARIFLPRSSFPVASKDEYYWVDLIGLNVVNREGVPLGQVRDLMTTGPHSVLCVEYTAQQEDGTAVTAERMIPFVSAYIDTVDIAGKCITVDWQPDY</sequence>
<organism>
    <name type="scientific">Polaromonas sp. (strain JS666 / ATCC BAA-500)</name>
    <dbReference type="NCBI Taxonomy" id="296591"/>
    <lineage>
        <taxon>Bacteria</taxon>
        <taxon>Pseudomonadati</taxon>
        <taxon>Pseudomonadota</taxon>
        <taxon>Betaproteobacteria</taxon>
        <taxon>Burkholderiales</taxon>
        <taxon>Comamonadaceae</taxon>
        <taxon>Polaromonas</taxon>
    </lineage>
</organism>
<accession>Q12CW5</accession>
<protein>
    <recommendedName>
        <fullName evidence="1">Ribosome maturation factor RimM</fullName>
    </recommendedName>
</protein>
<reference key="1">
    <citation type="journal article" date="2008" name="Appl. Environ. Microbiol.">
        <title>The genome of Polaromonas sp. strain JS666: insights into the evolution of a hydrocarbon- and xenobiotic-degrading bacterium, and features of relevance to biotechnology.</title>
        <authorList>
            <person name="Mattes T.E."/>
            <person name="Alexander A.K."/>
            <person name="Richardson P.M."/>
            <person name="Munk A.C."/>
            <person name="Han C.S."/>
            <person name="Stothard P."/>
            <person name="Coleman N.V."/>
        </authorList>
    </citation>
    <scope>NUCLEOTIDE SEQUENCE [LARGE SCALE GENOMIC DNA]</scope>
    <source>
        <strain>JS666 / ATCC BAA-500</strain>
    </source>
</reference>
<evidence type="ECO:0000255" key="1">
    <source>
        <dbReference type="HAMAP-Rule" id="MF_00014"/>
    </source>
</evidence>
<evidence type="ECO:0000305" key="2"/>
<gene>
    <name evidence="1" type="primary">rimM</name>
    <name type="ordered locus">Bpro_1691</name>
</gene>
<keyword id="KW-0143">Chaperone</keyword>
<keyword id="KW-0963">Cytoplasm</keyword>
<keyword id="KW-1185">Reference proteome</keyword>
<keyword id="KW-0690">Ribosome biogenesis</keyword>
<keyword id="KW-0698">rRNA processing</keyword>
<name>RIMM_POLSJ</name>
<feature type="chain" id="PRO_0000351785" description="Ribosome maturation factor RimM">
    <location>
        <begin position="1"/>
        <end position="202"/>
    </location>
</feature>
<feature type="domain" description="PRC barrel" evidence="1">
    <location>
        <begin position="121"/>
        <end position="202"/>
    </location>
</feature>
<dbReference type="EMBL" id="CP000316">
    <property type="protein sequence ID" value="ABE43627.1"/>
    <property type="status" value="ALT_INIT"/>
    <property type="molecule type" value="Genomic_DNA"/>
</dbReference>
<dbReference type="RefSeq" id="WP_041389442.1">
    <property type="nucleotide sequence ID" value="NC_007948.1"/>
</dbReference>
<dbReference type="SMR" id="Q12CW5"/>
<dbReference type="STRING" id="296591.Bpro_1691"/>
<dbReference type="KEGG" id="pol:Bpro_1691"/>
<dbReference type="eggNOG" id="COG0806">
    <property type="taxonomic scope" value="Bacteria"/>
</dbReference>
<dbReference type="HOGENOM" id="CLU_077636_1_0_4"/>
<dbReference type="OrthoDB" id="9783509at2"/>
<dbReference type="Proteomes" id="UP000001983">
    <property type="component" value="Chromosome"/>
</dbReference>
<dbReference type="GO" id="GO:0005737">
    <property type="term" value="C:cytoplasm"/>
    <property type="evidence" value="ECO:0007669"/>
    <property type="project" value="UniProtKB-SubCell"/>
</dbReference>
<dbReference type="GO" id="GO:0005840">
    <property type="term" value="C:ribosome"/>
    <property type="evidence" value="ECO:0007669"/>
    <property type="project" value="InterPro"/>
</dbReference>
<dbReference type="GO" id="GO:0043022">
    <property type="term" value="F:ribosome binding"/>
    <property type="evidence" value="ECO:0007669"/>
    <property type="project" value="InterPro"/>
</dbReference>
<dbReference type="GO" id="GO:0042274">
    <property type="term" value="P:ribosomal small subunit biogenesis"/>
    <property type="evidence" value="ECO:0007669"/>
    <property type="project" value="UniProtKB-UniRule"/>
</dbReference>
<dbReference type="GO" id="GO:0006364">
    <property type="term" value="P:rRNA processing"/>
    <property type="evidence" value="ECO:0007669"/>
    <property type="project" value="UniProtKB-UniRule"/>
</dbReference>
<dbReference type="Gene3D" id="2.30.30.240">
    <property type="entry name" value="PRC-barrel domain"/>
    <property type="match status" value="1"/>
</dbReference>
<dbReference type="Gene3D" id="2.40.30.60">
    <property type="entry name" value="RimM"/>
    <property type="match status" value="1"/>
</dbReference>
<dbReference type="HAMAP" id="MF_00014">
    <property type="entry name" value="Ribosome_mat_RimM"/>
    <property type="match status" value="1"/>
</dbReference>
<dbReference type="InterPro" id="IPR011033">
    <property type="entry name" value="PRC_barrel-like_sf"/>
</dbReference>
<dbReference type="InterPro" id="IPR056792">
    <property type="entry name" value="PRC_RimM"/>
</dbReference>
<dbReference type="InterPro" id="IPR011961">
    <property type="entry name" value="RimM"/>
</dbReference>
<dbReference type="InterPro" id="IPR002676">
    <property type="entry name" value="RimM_N"/>
</dbReference>
<dbReference type="InterPro" id="IPR036976">
    <property type="entry name" value="RimM_N_sf"/>
</dbReference>
<dbReference type="InterPro" id="IPR009000">
    <property type="entry name" value="Transl_B-barrel_sf"/>
</dbReference>
<dbReference type="NCBIfam" id="TIGR02273">
    <property type="entry name" value="16S_RimM"/>
    <property type="match status" value="1"/>
</dbReference>
<dbReference type="PANTHER" id="PTHR33692">
    <property type="entry name" value="RIBOSOME MATURATION FACTOR RIMM"/>
    <property type="match status" value="1"/>
</dbReference>
<dbReference type="PANTHER" id="PTHR33692:SF1">
    <property type="entry name" value="RIBOSOME MATURATION FACTOR RIMM"/>
    <property type="match status" value="1"/>
</dbReference>
<dbReference type="Pfam" id="PF24986">
    <property type="entry name" value="PRC_RimM"/>
    <property type="match status" value="1"/>
</dbReference>
<dbReference type="Pfam" id="PF01782">
    <property type="entry name" value="RimM"/>
    <property type="match status" value="1"/>
</dbReference>
<dbReference type="SUPFAM" id="SSF50346">
    <property type="entry name" value="PRC-barrel domain"/>
    <property type="match status" value="1"/>
</dbReference>
<dbReference type="SUPFAM" id="SSF50447">
    <property type="entry name" value="Translation proteins"/>
    <property type="match status" value="1"/>
</dbReference>
<comment type="function">
    <text evidence="1">An accessory protein needed during the final step in the assembly of 30S ribosomal subunit, possibly for assembly of the head region. Essential for efficient processing of 16S rRNA. May be needed both before and after RbfA during the maturation of 16S rRNA. It has affinity for free ribosomal 30S subunits but not for 70S ribosomes.</text>
</comment>
<comment type="subunit">
    <text evidence="1">Binds ribosomal protein uS19.</text>
</comment>
<comment type="subcellular location">
    <subcellularLocation>
        <location evidence="1">Cytoplasm</location>
    </subcellularLocation>
</comment>
<comment type="domain">
    <text evidence="1">The PRC barrel domain binds ribosomal protein uS19.</text>
</comment>
<comment type="similarity">
    <text evidence="1">Belongs to the RimM family.</text>
</comment>
<comment type="sequence caution" evidence="2">
    <conflict type="erroneous initiation">
        <sequence resource="EMBL-CDS" id="ABE43627"/>
    </conflict>
</comment>